<gene>
    <name type="primary">atpB</name>
</gene>
<proteinExistence type="inferred from homology"/>
<geneLocation type="plastid"/>
<dbReference type="EC" id="7.1.2.2"/>
<dbReference type="EMBL" id="AY100846">
    <property type="protein sequence ID" value="AAM52200.1"/>
    <property type="molecule type" value="Genomic_DNA"/>
</dbReference>
<dbReference type="EMBL" id="AM711639">
    <property type="protein sequence ID" value="CAM98333.1"/>
    <property type="molecule type" value="Genomic_DNA"/>
</dbReference>
<dbReference type="RefSeq" id="YP_001430047.1">
    <property type="nucleotide sequence ID" value="NC_009765.1"/>
</dbReference>
<dbReference type="SMR" id="Q8MBG3"/>
<dbReference type="GeneID" id="5536750"/>
<dbReference type="GO" id="GO:0009535">
    <property type="term" value="C:chloroplast thylakoid membrane"/>
    <property type="evidence" value="ECO:0007669"/>
    <property type="project" value="TreeGrafter"/>
</dbReference>
<dbReference type="GO" id="GO:0005739">
    <property type="term" value="C:mitochondrion"/>
    <property type="evidence" value="ECO:0007669"/>
    <property type="project" value="GOC"/>
</dbReference>
<dbReference type="GO" id="GO:0045259">
    <property type="term" value="C:proton-transporting ATP synthase complex"/>
    <property type="evidence" value="ECO:0007669"/>
    <property type="project" value="UniProtKB-KW"/>
</dbReference>
<dbReference type="GO" id="GO:0005524">
    <property type="term" value="F:ATP binding"/>
    <property type="evidence" value="ECO:0007669"/>
    <property type="project" value="UniProtKB-KW"/>
</dbReference>
<dbReference type="GO" id="GO:0016887">
    <property type="term" value="F:ATP hydrolysis activity"/>
    <property type="evidence" value="ECO:0007669"/>
    <property type="project" value="InterPro"/>
</dbReference>
<dbReference type="GO" id="GO:0046933">
    <property type="term" value="F:proton-transporting ATP synthase activity, rotational mechanism"/>
    <property type="evidence" value="ECO:0007669"/>
    <property type="project" value="InterPro"/>
</dbReference>
<dbReference type="GO" id="GO:0042776">
    <property type="term" value="P:proton motive force-driven mitochondrial ATP synthesis"/>
    <property type="evidence" value="ECO:0007669"/>
    <property type="project" value="TreeGrafter"/>
</dbReference>
<dbReference type="CDD" id="cd18110">
    <property type="entry name" value="ATP-synt_F1_beta_C"/>
    <property type="match status" value="1"/>
</dbReference>
<dbReference type="CDD" id="cd18115">
    <property type="entry name" value="ATP-synt_F1_beta_N"/>
    <property type="match status" value="1"/>
</dbReference>
<dbReference type="CDD" id="cd01133">
    <property type="entry name" value="F1-ATPase_beta_CD"/>
    <property type="match status" value="1"/>
</dbReference>
<dbReference type="FunFam" id="1.10.1140.10:FF:000001">
    <property type="entry name" value="ATP synthase subunit beta"/>
    <property type="match status" value="1"/>
</dbReference>
<dbReference type="FunFam" id="3.40.50.12240:FF:000006">
    <property type="entry name" value="ATP synthase subunit beta"/>
    <property type="match status" value="1"/>
</dbReference>
<dbReference type="FunFam" id="3.40.50.300:FF:000026">
    <property type="entry name" value="ATP synthase subunit beta"/>
    <property type="match status" value="1"/>
</dbReference>
<dbReference type="FunFam" id="2.40.10.170:FF:000002">
    <property type="entry name" value="ATP synthase subunit beta, chloroplastic"/>
    <property type="match status" value="1"/>
</dbReference>
<dbReference type="Gene3D" id="2.40.10.170">
    <property type="match status" value="1"/>
</dbReference>
<dbReference type="Gene3D" id="1.10.1140.10">
    <property type="entry name" value="Bovine Mitochondrial F1-atpase, Atp Synthase Beta Chain, Chain D, domain 3"/>
    <property type="match status" value="1"/>
</dbReference>
<dbReference type="Gene3D" id="3.40.50.300">
    <property type="entry name" value="P-loop containing nucleotide triphosphate hydrolases"/>
    <property type="match status" value="1"/>
</dbReference>
<dbReference type="HAMAP" id="MF_01347">
    <property type="entry name" value="ATP_synth_beta_bact"/>
    <property type="match status" value="1"/>
</dbReference>
<dbReference type="InterPro" id="IPR003593">
    <property type="entry name" value="AAA+_ATPase"/>
</dbReference>
<dbReference type="InterPro" id="IPR055190">
    <property type="entry name" value="ATP-synt_VA_C"/>
</dbReference>
<dbReference type="InterPro" id="IPR005722">
    <property type="entry name" value="ATP_synth_F1_bsu"/>
</dbReference>
<dbReference type="InterPro" id="IPR020003">
    <property type="entry name" value="ATPase_a/bsu_AS"/>
</dbReference>
<dbReference type="InterPro" id="IPR050053">
    <property type="entry name" value="ATPase_alpha/beta_chains"/>
</dbReference>
<dbReference type="InterPro" id="IPR004100">
    <property type="entry name" value="ATPase_F1/V1/A1_a/bsu_N"/>
</dbReference>
<dbReference type="InterPro" id="IPR036121">
    <property type="entry name" value="ATPase_F1/V1/A1_a/bsu_N_sf"/>
</dbReference>
<dbReference type="InterPro" id="IPR000194">
    <property type="entry name" value="ATPase_F1/V1/A1_a/bsu_nucl-bd"/>
</dbReference>
<dbReference type="InterPro" id="IPR024034">
    <property type="entry name" value="ATPase_F1/V1_b/a_C"/>
</dbReference>
<dbReference type="InterPro" id="IPR027417">
    <property type="entry name" value="P-loop_NTPase"/>
</dbReference>
<dbReference type="NCBIfam" id="TIGR01039">
    <property type="entry name" value="atpD"/>
    <property type="match status" value="1"/>
</dbReference>
<dbReference type="PANTHER" id="PTHR15184">
    <property type="entry name" value="ATP SYNTHASE"/>
    <property type="match status" value="1"/>
</dbReference>
<dbReference type="PANTHER" id="PTHR15184:SF71">
    <property type="entry name" value="ATP SYNTHASE SUBUNIT BETA, MITOCHONDRIAL"/>
    <property type="match status" value="1"/>
</dbReference>
<dbReference type="Pfam" id="PF00006">
    <property type="entry name" value="ATP-synt_ab"/>
    <property type="match status" value="1"/>
</dbReference>
<dbReference type="Pfam" id="PF02874">
    <property type="entry name" value="ATP-synt_ab_N"/>
    <property type="match status" value="1"/>
</dbReference>
<dbReference type="Pfam" id="PF22919">
    <property type="entry name" value="ATP-synt_VA_C"/>
    <property type="match status" value="1"/>
</dbReference>
<dbReference type="SMART" id="SM00382">
    <property type="entry name" value="AAA"/>
    <property type="match status" value="1"/>
</dbReference>
<dbReference type="SUPFAM" id="SSF47917">
    <property type="entry name" value="C-terminal domain of alpha and beta subunits of F1 ATP synthase"/>
    <property type="match status" value="1"/>
</dbReference>
<dbReference type="SUPFAM" id="SSF50615">
    <property type="entry name" value="N-terminal domain of alpha and beta subunits of F1 ATP synthase"/>
    <property type="match status" value="1"/>
</dbReference>
<dbReference type="SUPFAM" id="SSF52540">
    <property type="entry name" value="P-loop containing nucleoside triphosphate hydrolases"/>
    <property type="match status" value="1"/>
</dbReference>
<dbReference type="PROSITE" id="PS00152">
    <property type="entry name" value="ATPASE_ALPHA_BETA"/>
    <property type="match status" value="1"/>
</dbReference>
<feature type="chain" id="PRO_0000254466" description="ATP synthase subunit beta, plastid">
    <location>
        <begin position="1"/>
        <end position="494"/>
    </location>
</feature>
<feature type="binding site" evidence="1">
    <location>
        <begin position="169"/>
        <end position="176"/>
    </location>
    <ligand>
        <name>ATP</name>
        <dbReference type="ChEBI" id="CHEBI:30616"/>
    </ligand>
</feature>
<accession>Q8MBG3</accession>
<accession>A7M905</accession>
<comment type="function">
    <text evidence="1">Produces ATP from ADP in the presence of a proton gradient across the membrane. The catalytic sites are hosted primarily by the beta subunits (By similarity).</text>
</comment>
<comment type="catalytic activity">
    <reaction>
        <text>ATP + H2O + 4 H(+)(in) = ADP + phosphate + 5 H(+)(out)</text>
        <dbReference type="Rhea" id="RHEA:57720"/>
        <dbReference type="ChEBI" id="CHEBI:15377"/>
        <dbReference type="ChEBI" id="CHEBI:15378"/>
        <dbReference type="ChEBI" id="CHEBI:30616"/>
        <dbReference type="ChEBI" id="CHEBI:43474"/>
        <dbReference type="ChEBI" id="CHEBI:456216"/>
        <dbReference type="EC" id="7.1.2.2"/>
    </reaction>
</comment>
<comment type="subunit">
    <text evidence="1">F-type ATPases have 2 components, CF(1) - the catalytic core - and CF(0) - the membrane proton channel. CF(1) has five subunits: alpha(3), beta(3), gamma(1), delta(1), epsilon(1). CF(0) has four main subunits: a(1), b(1), b'(1) and c(9-12) (By similarity).</text>
</comment>
<comment type="subcellular location">
    <subcellularLocation>
        <location evidence="2">Plastid thylakoid membrane</location>
        <topology evidence="2">Peripheral membrane protein</topology>
    </subcellularLocation>
</comment>
<comment type="similarity">
    <text evidence="2">Belongs to the ATPase alpha/beta chains family.</text>
</comment>
<comment type="caution">
    <text evidence="2">Young tissue from this organism is photosynthetic and contains some thylakoids, although the photosynthetic activity does not exceed the light compensation point.</text>
</comment>
<evidence type="ECO:0000250" key="1"/>
<evidence type="ECO:0000305" key="2"/>
<protein>
    <recommendedName>
        <fullName>ATP synthase subunit beta, plastid</fullName>
        <ecNumber>7.1.2.2</ecNumber>
    </recommendedName>
    <alternativeName>
        <fullName>ATP synthase F1 sector subunit beta</fullName>
    </alternativeName>
    <alternativeName>
        <fullName>F-ATPase subunit beta</fullName>
    </alternativeName>
</protein>
<keyword id="KW-0066">ATP synthesis</keyword>
<keyword id="KW-0067">ATP-binding</keyword>
<keyword id="KW-0139">CF(1)</keyword>
<keyword id="KW-0375">Hydrogen ion transport</keyword>
<keyword id="KW-0406">Ion transport</keyword>
<keyword id="KW-0472">Membrane</keyword>
<keyword id="KW-0547">Nucleotide-binding</keyword>
<keyword id="KW-0934">Plastid</keyword>
<keyword id="KW-0793">Thylakoid</keyword>
<keyword id="KW-1278">Translocase</keyword>
<keyword id="KW-0813">Transport</keyword>
<organism>
    <name type="scientific">Cuscuta gronovii</name>
    <name type="common">Common dodder</name>
    <name type="synonym">Epithymum gronovii</name>
    <dbReference type="NCBI Taxonomy" id="35886"/>
    <lineage>
        <taxon>Eukaryota</taxon>
        <taxon>Viridiplantae</taxon>
        <taxon>Streptophyta</taxon>
        <taxon>Embryophyta</taxon>
        <taxon>Tracheophyta</taxon>
        <taxon>Spermatophyta</taxon>
        <taxon>Magnoliopsida</taxon>
        <taxon>eudicotyledons</taxon>
        <taxon>Gunneridae</taxon>
        <taxon>Pentapetalae</taxon>
        <taxon>asterids</taxon>
        <taxon>lamiids</taxon>
        <taxon>Solanales</taxon>
        <taxon>Convolvulaceae</taxon>
        <taxon>Cuscuteae</taxon>
        <taxon>Cuscuta</taxon>
        <taxon>Cuscuta subgen. Grammica</taxon>
        <taxon>Cuscuta sect. Oxycarpae</taxon>
    </lineage>
</organism>
<reference key="1">
    <citation type="journal article" date="2002" name="Am. J. Bot.">
        <title>Monophyly of the Convolvulaceae and circumscription of their major lineages based on DNA sequences of multiple chloroplast loci.</title>
        <authorList>
            <person name="Stefanovic S."/>
            <person name="Krueger L."/>
            <person name="Olmstead R.G."/>
        </authorList>
        <dbReference type="AGRICOLA" id="IND23320510"/>
    </citation>
    <scope>NUCLEOTIDE SEQUENCE [GENOMIC DNA]</scope>
</reference>
<reference key="2">
    <citation type="journal article" date="2007" name="BMC Plant Biol.">
        <title>Complete DNA sequences of the plastid genomes of two parasitic flowering plant species, Cuscuta reflexa and Cuscuta gronovii.</title>
        <authorList>
            <person name="Funk H.T."/>
            <person name="Berg S."/>
            <person name="Krupinska K."/>
            <person name="Maier U.-G."/>
            <person name="Krause K."/>
        </authorList>
    </citation>
    <scope>NUCLEOTIDE SEQUENCE [LARGE SCALE GENOMIC DNA]</scope>
</reference>
<sequence>MRLTPNYDYEVSSINKKKRGYIVQIIGPVLDVAFSPGMMPSIYNALVVQGRHNQEPNVTCEVQQLLGNNRVRAVAMSDTDGLMRGMEVIDTGTPISVPVGGSTLGRIFNVLGEPVDQLGPVETNQLSPIHRSAPPFLKLDTRLSIFETGIKVVDLLAPYRRGGKVGLFGGAGVGKTVLIMELINNIAKAYGGVSVFGGVGERTREGNDLYMEMKESGVINQQKLDESKVALVYGQMNEPPGARMRVGLTALTMAEYFRDVNRQDVLLFIDNIFRFVQAGSEVSALLGRMPSAVGYQPTLSTEMGSLQERITSTKEGSITSIQAVYVPADDLTDPAPATTFAHLDATTVLSRSLAAKGIYPAVDPLDSTSMMLQPQIVGEQHYKTAQRVKQTLQRYKELQDIIAILGLDELSDDDRLTVARARKIERFLSQPFFVAEIFTGSPGKYVSLAETIRGCTLILSGEFDDLPEQAFYLVGTIDEVNAKAMLEEEKNFTK</sequence>
<name>ATPB_CUSGR</name>